<keyword id="KW-1185">Reference proteome</keyword>
<dbReference type="EMBL" id="CU928145">
    <property type="protein sequence ID" value="CAU97186.1"/>
    <property type="molecule type" value="Genomic_DNA"/>
</dbReference>
<dbReference type="RefSeq" id="WP_001307143.1">
    <property type="nucleotide sequence ID" value="NC_011748.1"/>
</dbReference>
<dbReference type="SMR" id="B7LHH6"/>
<dbReference type="KEGG" id="eck:EC55989_1328"/>
<dbReference type="HOGENOM" id="CLU_099590_0_0_6"/>
<dbReference type="Proteomes" id="UP000000746">
    <property type="component" value="Chromosome"/>
</dbReference>
<dbReference type="Gene3D" id="3.10.450.50">
    <property type="match status" value="1"/>
</dbReference>
<dbReference type="HAMAP" id="MF_00612">
    <property type="entry name" value="UPF0225"/>
    <property type="match status" value="1"/>
</dbReference>
<dbReference type="InterPro" id="IPR032710">
    <property type="entry name" value="NTF2-like_dom_sf"/>
</dbReference>
<dbReference type="InterPro" id="IPR004027">
    <property type="entry name" value="SEC_C_motif"/>
</dbReference>
<dbReference type="InterPro" id="IPR023006">
    <property type="entry name" value="UPF0225"/>
</dbReference>
<dbReference type="InterPro" id="IPR048469">
    <property type="entry name" value="YchJ-like_M"/>
</dbReference>
<dbReference type="NCBIfam" id="NF002449">
    <property type="entry name" value="PRK01617.1"/>
    <property type="match status" value="1"/>
</dbReference>
<dbReference type="NCBIfam" id="NF002486">
    <property type="entry name" value="PRK01752.1"/>
    <property type="match status" value="1"/>
</dbReference>
<dbReference type="PANTHER" id="PTHR33747:SF1">
    <property type="entry name" value="ADENYLATE CYCLASE-ASSOCIATED CAP C-TERMINAL DOMAIN-CONTAINING PROTEIN"/>
    <property type="match status" value="1"/>
</dbReference>
<dbReference type="PANTHER" id="PTHR33747">
    <property type="entry name" value="UPF0225 PROTEIN SCO1677"/>
    <property type="match status" value="1"/>
</dbReference>
<dbReference type="Pfam" id="PF02810">
    <property type="entry name" value="SEC-C"/>
    <property type="match status" value="2"/>
</dbReference>
<dbReference type="Pfam" id="PF17775">
    <property type="entry name" value="YchJ_M-like"/>
    <property type="match status" value="1"/>
</dbReference>
<dbReference type="SUPFAM" id="SSF54427">
    <property type="entry name" value="NTF2-like"/>
    <property type="match status" value="1"/>
</dbReference>
<dbReference type="SUPFAM" id="SSF103642">
    <property type="entry name" value="Sec-C motif"/>
    <property type="match status" value="1"/>
</dbReference>
<organism>
    <name type="scientific">Escherichia coli (strain 55989 / EAEC)</name>
    <dbReference type="NCBI Taxonomy" id="585055"/>
    <lineage>
        <taxon>Bacteria</taxon>
        <taxon>Pseudomonadati</taxon>
        <taxon>Pseudomonadota</taxon>
        <taxon>Gammaproteobacteria</taxon>
        <taxon>Enterobacterales</taxon>
        <taxon>Enterobacteriaceae</taxon>
        <taxon>Escherichia</taxon>
    </lineage>
</organism>
<name>YCHJ_ECO55</name>
<accession>B7LHH6</accession>
<protein>
    <recommendedName>
        <fullName evidence="1">UPF0225 protein YchJ</fullName>
    </recommendedName>
</protein>
<reference key="1">
    <citation type="journal article" date="2009" name="PLoS Genet.">
        <title>Organised genome dynamics in the Escherichia coli species results in highly diverse adaptive paths.</title>
        <authorList>
            <person name="Touchon M."/>
            <person name="Hoede C."/>
            <person name="Tenaillon O."/>
            <person name="Barbe V."/>
            <person name="Baeriswyl S."/>
            <person name="Bidet P."/>
            <person name="Bingen E."/>
            <person name="Bonacorsi S."/>
            <person name="Bouchier C."/>
            <person name="Bouvet O."/>
            <person name="Calteau A."/>
            <person name="Chiapello H."/>
            <person name="Clermont O."/>
            <person name="Cruveiller S."/>
            <person name="Danchin A."/>
            <person name="Diard M."/>
            <person name="Dossat C."/>
            <person name="Karoui M.E."/>
            <person name="Frapy E."/>
            <person name="Garry L."/>
            <person name="Ghigo J.M."/>
            <person name="Gilles A.M."/>
            <person name="Johnson J."/>
            <person name="Le Bouguenec C."/>
            <person name="Lescat M."/>
            <person name="Mangenot S."/>
            <person name="Martinez-Jehanne V."/>
            <person name="Matic I."/>
            <person name="Nassif X."/>
            <person name="Oztas S."/>
            <person name="Petit M.A."/>
            <person name="Pichon C."/>
            <person name="Rouy Z."/>
            <person name="Ruf C.S."/>
            <person name="Schneider D."/>
            <person name="Tourret J."/>
            <person name="Vacherie B."/>
            <person name="Vallenet D."/>
            <person name="Medigue C."/>
            <person name="Rocha E.P.C."/>
            <person name="Denamur E."/>
        </authorList>
    </citation>
    <scope>NUCLEOTIDE SEQUENCE [LARGE SCALE GENOMIC DNA]</scope>
    <source>
        <strain>55989 / EAEC</strain>
    </source>
</reference>
<evidence type="ECO:0000255" key="1">
    <source>
        <dbReference type="HAMAP-Rule" id="MF_00612"/>
    </source>
</evidence>
<sequence>MSQLCPCGSAVEYSLCCHPYVSGEKVAPDPEHLMRSRYCAFVMQDADYLIKTWHPSCGAAALRAELMAGFAHTEWLGLTVFEHCWQDADNIGFVSFVARFTEGGKTGAIIERSRFLKENGQWYYIDGTRPQFGRNDPCPCGSGKKFKKCCGQ</sequence>
<feature type="chain" id="PRO_1000200397" description="UPF0225 protein YchJ">
    <location>
        <begin position="1"/>
        <end position="152"/>
    </location>
</feature>
<proteinExistence type="inferred from homology"/>
<gene>
    <name evidence="1" type="primary">ychJ</name>
    <name type="ordered locus">EC55989_1328</name>
</gene>
<comment type="similarity">
    <text evidence="1">Belongs to the UPF0225 family.</text>
</comment>